<evidence type="ECO:0000250" key="1"/>
<evidence type="ECO:0000250" key="2">
    <source>
        <dbReference type="UniProtKB" id="P01112"/>
    </source>
</evidence>
<evidence type="ECO:0000305" key="3"/>
<protein>
    <recommendedName>
        <fullName>Ras-like protein</fullName>
        <ecNumber evidence="2">3.6.5.2</ecNumber>
    </recommendedName>
</protein>
<gene>
    <name type="primary">RAS1</name>
    <name type="synonym">RAS</name>
    <name type="ordered locus">CNA02810</name>
</gene>
<organism>
    <name type="scientific">Cryptococcus neoformans var. neoformans serotype D (strain JEC21 / ATCC MYA-565)</name>
    <name type="common">Filobasidiella neoformans</name>
    <dbReference type="NCBI Taxonomy" id="214684"/>
    <lineage>
        <taxon>Eukaryota</taxon>
        <taxon>Fungi</taxon>
        <taxon>Dikarya</taxon>
        <taxon>Basidiomycota</taxon>
        <taxon>Agaricomycotina</taxon>
        <taxon>Tremellomycetes</taxon>
        <taxon>Tremellales</taxon>
        <taxon>Cryptococcaceae</taxon>
        <taxon>Cryptococcus</taxon>
        <taxon>Cryptococcus neoformans species complex</taxon>
    </lineage>
</organism>
<keyword id="KW-1003">Cell membrane</keyword>
<keyword id="KW-0342">GTP-binding</keyword>
<keyword id="KW-0378">Hydrolase</keyword>
<keyword id="KW-0449">Lipoprotein</keyword>
<keyword id="KW-0472">Membrane</keyword>
<keyword id="KW-0488">Methylation</keyword>
<keyword id="KW-0547">Nucleotide-binding</keyword>
<keyword id="KW-0564">Palmitate</keyword>
<keyword id="KW-0636">Prenylation</keyword>
<keyword id="KW-1185">Reference proteome</keyword>
<reference key="1">
    <citation type="journal article" date="1999" name="Yeast">
        <title>Molecular cloning of homologs of RAS and RHO1 genes from Cryptococcus neoformans.</title>
        <authorList>
            <person name="Tanaka K."/>
            <person name="Nambu H."/>
            <person name="Katoh Y."/>
            <person name="Kai M."/>
            <person name="Hidaka Y."/>
        </authorList>
    </citation>
    <scope>NUCLEOTIDE SEQUENCE [MRNA]</scope>
</reference>
<reference key="2">
    <citation type="journal article" date="2003" name="Fungal Genet. Biol.">
        <title>Ras1 controls pheromone expression and response during mating in Cryptococcus neoformans.</title>
        <authorList>
            <person name="Waugh M.S."/>
            <person name="Vallim M.A."/>
            <person name="Heitman J."/>
            <person name="Alspaugh J.A."/>
        </authorList>
    </citation>
    <scope>NUCLEOTIDE SEQUENCE [GENOMIC DNA]</scope>
    <source>
        <strain>JEC21 / ATCC MYA-565</strain>
    </source>
</reference>
<reference key="3">
    <citation type="journal article" date="2005" name="Science">
        <title>The genome of the basidiomycetous yeast and human pathogen Cryptococcus neoformans.</title>
        <authorList>
            <person name="Loftus B.J."/>
            <person name="Fung E."/>
            <person name="Roncaglia P."/>
            <person name="Rowley D."/>
            <person name="Amedeo P."/>
            <person name="Bruno D."/>
            <person name="Vamathevan J."/>
            <person name="Miranda M."/>
            <person name="Anderson I.J."/>
            <person name="Fraser J.A."/>
            <person name="Allen J.E."/>
            <person name="Bosdet I.E."/>
            <person name="Brent M.R."/>
            <person name="Chiu R."/>
            <person name="Doering T.L."/>
            <person name="Donlin M.J."/>
            <person name="D'Souza C.A."/>
            <person name="Fox D.S."/>
            <person name="Grinberg V."/>
            <person name="Fu J."/>
            <person name="Fukushima M."/>
            <person name="Haas B.J."/>
            <person name="Huang J.C."/>
            <person name="Janbon G."/>
            <person name="Jones S.J.M."/>
            <person name="Koo H.L."/>
            <person name="Krzywinski M.I."/>
            <person name="Kwon-Chung K.J."/>
            <person name="Lengeler K.B."/>
            <person name="Maiti R."/>
            <person name="Marra M.A."/>
            <person name="Marra R.E."/>
            <person name="Mathewson C.A."/>
            <person name="Mitchell T.G."/>
            <person name="Pertea M."/>
            <person name="Riggs F.R."/>
            <person name="Salzberg S.L."/>
            <person name="Schein J.E."/>
            <person name="Shvartsbeyn A."/>
            <person name="Shin H."/>
            <person name="Shumway M."/>
            <person name="Specht C.A."/>
            <person name="Suh B.B."/>
            <person name="Tenney A."/>
            <person name="Utterback T.R."/>
            <person name="Wickes B.L."/>
            <person name="Wortman J.R."/>
            <person name="Wye N.H."/>
            <person name="Kronstad J.W."/>
            <person name="Lodge J.K."/>
            <person name="Heitman J."/>
            <person name="Davis R.W."/>
            <person name="Fraser C.M."/>
            <person name="Hyman R.W."/>
        </authorList>
    </citation>
    <scope>NUCLEOTIDE SEQUENCE [LARGE SCALE GENOMIC DNA]</scope>
    <source>
        <strain>JEC21 / ATCC MYA-565</strain>
    </source>
</reference>
<comment type="catalytic activity">
    <reaction evidence="2">
        <text>GTP + H2O = GDP + phosphate + H(+)</text>
        <dbReference type="Rhea" id="RHEA:19669"/>
        <dbReference type="ChEBI" id="CHEBI:15377"/>
        <dbReference type="ChEBI" id="CHEBI:15378"/>
        <dbReference type="ChEBI" id="CHEBI:37565"/>
        <dbReference type="ChEBI" id="CHEBI:43474"/>
        <dbReference type="ChEBI" id="CHEBI:58189"/>
        <dbReference type="EC" id="3.6.5.2"/>
    </reaction>
</comment>
<comment type="activity regulation">
    <text>Alternates between an inactive form bound to GDP and an active form bound to GTP. Activated by a guanine nucleotide-exchange factor (GEF) and inactivated by a GTPase-activating protein (GAP).</text>
</comment>
<comment type="subcellular location">
    <subcellularLocation>
        <location evidence="3">Cell membrane</location>
        <topology evidence="3">Lipid-anchor</topology>
        <orientation evidence="3">Cytoplasmic side</orientation>
    </subcellularLocation>
</comment>
<comment type="similarity">
    <text evidence="3">Belongs to the small GTPase superfamily. Ras family.</text>
</comment>
<proteinExistence type="evidence at transcript level"/>
<feature type="chain" id="PRO_0000082674" description="Ras-like protein">
    <location>
        <begin position="1"/>
        <end position="213"/>
    </location>
</feature>
<feature type="propeptide" id="PRO_0000281329" description="Removed in mature form" evidence="1">
    <location>
        <begin position="214"/>
        <end position="216"/>
    </location>
</feature>
<feature type="short sequence motif" description="Effector region">
    <location>
        <begin position="38"/>
        <end position="46"/>
    </location>
</feature>
<feature type="binding site" evidence="1">
    <location>
        <begin position="16"/>
        <end position="23"/>
    </location>
    <ligand>
        <name>GTP</name>
        <dbReference type="ChEBI" id="CHEBI:37565"/>
    </ligand>
</feature>
<feature type="binding site" evidence="1">
    <location>
        <begin position="63"/>
        <end position="67"/>
    </location>
    <ligand>
        <name>GTP</name>
        <dbReference type="ChEBI" id="CHEBI:37565"/>
    </ligand>
</feature>
<feature type="binding site" evidence="1">
    <location>
        <begin position="122"/>
        <end position="125"/>
    </location>
    <ligand>
        <name>GTP</name>
        <dbReference type="ChEBI" id="CHEBI:37565"/>
    </ligand>
</feature>
<feature type="modified residue" description="Cysteine methyl ester" evidence="1">
    <location>
        <position position="213"/>
    </location>
</feature>
<feature type="lipid moiety-binding region" description="S-palmitoyl cysteine" evidence="1">
    <location>
        <position position="209"/>
    </location>
</feature>
<feature type="lipid moiety-binding region" description="S-palmitoyl cysteine" evidence="1">
    <location>
        <position position="210"/>
    </location>
</feature>
<feature type="lipid moiety-binding region" description="S-geranylgeranyl cysteine" evidence="1">
    <location>
        <position position="213"/>
    </location>
</feature>
<feature type="sequence conflict" description="In Ref. 2; AAG25584." evidence="3" ref="2">
    <original>E</original>
    <variation>D</variation>
    <location>
        <position position="75"/>
    </location>
</feature>
<feature type="sequence conflict" description="In Ref. 2; AAG25584." evidence="3" ref="2">
    <original>S</original>
    <variation>P</variation>
    <location>
        <position position="89"/>
    </location>
</feature>
<feature type="sequence conflict" description="In Ref. 2; AAG25584." evidence="3" ref="2">
    <location>
        <begin position="176"/>
        <end position="181"/>
    </location>
</feature>
<name>RAS_CRYNJ</name>
<dbReference type="EC" id="3.6.5.2" evidence="2"/>
<dbReference type="EMBL" id="AB017640">
    <property type="protein sequence ID" value="BAA33397.1"/>
    <property type="molecule type" value="mRNA"/>
</dbReference>
<dbReference type="EMBL" id="AF294647">
    <property type="protein sequence ID" value="AAG25584.1"/>
    <property type="molecule type" value="Genomic_DNA"/>
</dbReference>
<dbReference type="EMBL" id="AE017341">
    <property type="protein sequence ID" value="AAW40866.1"/>
    <property type="molecule type" value="Genomic_DNA"/>
</dbReference>
<dbReference type="RefSeq" id="XP_566685.1">
    <property type="nucleotide sequence ID" value="XM_566685.1"/>
</dbReference>
<dbReference type="SMR" id="P0CQ42"/>
<dbReference type="FunCoup" id="P0CQ42">
    <property type="interactions" value="223"/>
</dbReference>
<dbReference type="STRING" id="214684.P0CQ42"/>
<dbReference type="PaxDb" id="214684-P0CQ42"/>
<dbReference type="EnsemblFungi" id="AAW40866">
    <property type="protein sequence ID" value="AAW40866"/>
    <property type="gene ID" value="CNA02810"/>
</dbReference>
<dbReference type="GeneID" id="3253597"/>
<dbReference type="KEGG" id="cne:CNA02810"/>
<dbReference type="VEuPathDB" id="FungiDB:CNA02810"/>
<dbReference type="eggNOG" id="KOG0395">
    <property type="taxonomic scope" value="Eukaryota"/>
</dbReference>
<dbReference type="HOGENOM" id="CLU_041217_9_0_1"/>
<dbReference type="InParanoid" id="P0CQ42"/>
<dbReference type="OMA" id="CCGGCVI"/>
<dbReference type="OrthoDB" id="5976022at2759"/>
<dbReference type="Proteomes" id="UP000002149">
    <property type="component" value="Chromosome 1"/>
</dbReference>
<dbReference type="GO" id="GO:0005886">
    <property type="term" value="C:plasma membrane"/>
    <property type="evidence" value="ECO:0000318"/>
    <property type="project" value="GO_Central"/>
</dbReference>
<dbReference type="GO" id="GO:0003925">
    <property type="term" value="F:G protein activity"/>
    <property type="evidence" value="ECO:0007669"/>
    <property type="project" value="UniProtKB-EC"/>
</dbReference>
<dbReference type="GO" id="GO:0019003">
    <property type="term" value="F:GDP binding"/>
    <property type="evidence" value="ECO:0000318"/>
    <property type="project" value="GO_Central"/>
</dbReference>
<dbReference type="GO" id="GO:0005525">
    <property type="term" value="F:GTP binding"/>
    <property type="evidence" value="ECO:0000318"/>
    <property type="project" value="GO_Central"/>
</dbReference>
<dbReference type="GO" id="GO:0003924">
    <property type="term" value="F:GTPase activity"/>
    <property type="evidence" value="ECO:0000318"/>
    <property type="project" value="GO_Central"/>
</dbReference>
<dbReference type="GO" id="GO:0007165">
    <property type="term" value="P:signal transduction"/>
    <property type="evidence" value="ECO:0007669"/>
    <property type="project" value="InterPro"/>
</dbReference>
<dbReference type="FunFam" id="3.40.50.300:FF:000080">
    <property type="entry name" value="Ras-like GTPase Ras1"/>
    <property type="match status" value="1"/>
</dbReference>
<dbReference type="Gene3D" id="3.40.50.300">
    <property type="entry name" value="P-loop containing nucleotide triphosphate hydrolases"/>
    <property type="match status" value="1"/>
</dbReference>
<dbReference type="InterPro" id="IPR027417">
    <property type="entry name" value="P-loop_NTPase"/>
</dbReference>
<dbReference type="InterPro" id="IPR005225">
    <property type="entry name" value="Small_GTP-bd"/>
</dbReference>
<dbReference type="InterPro" id="IPR001806">
    <property type="entry name" value="Small_GTPase"/>
</dbReference>
<dbReference type="InterPro" id="IPR020849">
    <property type="entry name" value="Small_GTPase_Ras-type"/>
</dbReference>
<dbReference type="NCBIfam" id="TIGR00231">
    <property type="entry name" value="small_GTP"/>
    <property type="match status" value="1"/>
</dbReference>
<dbReference type="PANTHER" id="PTHR24070">
    <property type="entry name" value="RAS, DI-RAS, AND RHEB FAMILY MEMBERS OF SMALL GTPASE SUPERFAMILY"/>
    <property type="match status" value="1"/>
</dbReference>
<dbReference type="Pfam" id="PF00071">
    <property type="entry name" value="Ras"/>
    <property type="match status" value="1"/>
</dbReference>
<dbReference type="PRINTS" id="PR00449">
    <property type="entry name" value="RASTRNSFRMNG"/>
</dbReference>
<dbReference type="SMART" id="SM00175">
    <property type="entry name" value="RAB"/>
    <property type="match status" value="1"/>
</dbReference>
<dbReference type="SMART" id="SM00176">
    <property type="entry name" value="RAN"/>
    <property type="match status" value="1"/>
</dbReference>
<dbReference type="SMART" id="SM00173">
    <property type="entry name" value="RAS"/>
    <property type="match status" value="1"/>
</dbReference>
<dbReference type="SMART" id="SM00174">
    <property type="entry name" value="RHO"/>
    <property type="match status" value="1"/>
</dbReference>
<dbReference type="SUPFAM" id="SSF52540">
    <property type="entry name" value="P-loop containing nucleoside triphosphate hydrolases"/>
    <property type="match status" value="1"/>
</dbReference>
<dbReference type="PROSITE" id="PS51421">
    <property type="entry name" value="RAS"/>
    <property type="match status" value="1"/>
</dbReference>
<accession>P0CQ42</accession>
<accession>O74650</accession>
<accession>Q560H3</accession>
<accession>Q5KPH2</accession>
<accession>Q9HFU0</accession>
<sequence length="216" mass="24252">MSKAQFLREYKLVVVGGGGVGKSALTIQFIQSHFVDEYDPTIEDSYRKQCIIDEEVALLDVLDTAGQEEYGAMREQYMRTGEGFLLVYSITSRSSFEEVSTFHQQILRVKDKDYFPVVVVANKCDLEYERQVQPHEGRDLAKRFNAQCIETSAKQRVNVDEAFIAVVRAIRRYQKESGPPQAVNAPAKSQMSAVGGRAAEKDDHVDKGCCRGCVVL</sequence>